<accession>A6U873</accession>
<keyword id="KW-0687">Ribonucleoprotein</keyword>
<keyword id="KW-0689">Ribosomal protein</keyword>
<keyword id="KW-0694">RNA-binding</keyword>
<keyword id="KW-0699">rRNA-binding</keyword>
<protein>
    <recommendedName>
        <fullName evidence="1">Small ribosomal subunit protein uS8</fullName>
    </recommendedName>
    <alternativeName>
        <fullName evidence="2">30S ribosomal protein S8</fullName>
    </alternativeName>
</protein>
<name>RS8_SINMW</name>
<reference key="1">
    <citation type="submission" date="2007-06" db="EMBL/GenBank/DDBJ databases">
        <title>Complete sequence of Sinorhizobium medicae WSM419 chromosome.</title>
        <authorList>
            <consortium name="US DOE Joint Genome Institute"/>
            <person name="Copeland A."/>
            <person name="Lucas S."/>
            <person name="Lapidus A."/>
            <person name="Barry K."/>
            <person name="Glavina del Rio T."/>
            <person name="Dalin E."/>
            <person name="Tice H."/>
            <person name="Pitluck S."/>
            <person name="Chain P."/>
            <person name="Malfatti S."/>
            <person name="Shin M."/>
            <person name="Vergez L."/>
            <person name="Schmutz J."/>
            <person name="Larimer F."/>
            <person name="Land M."/>
            <person name="Hauser L."/>
            <person name="Kyrpides N."/>
            <person name="Mikhailova N."/>
            <person name="Reeve W.G."/>
            <person name="Richardson P."/>
        </authorList>
    </citation>
    <scope>NUCLEOTIDE SEQUENCE [LARGE SCALE GENOMIC DNA]</scope>
    <source>
        <strain>WSM419</strain>
    </source>
</reference>
<evidence type="ECO:0000255" key="1">
    <source>
        <dbReference type="HAMAP-Rule" id="MF_01302"/>
    </source>
</evidence>
<evidence type="ECO:0000305" key="2"/>
<dbReference type="EMBL" id="CP000738">
    <property type="protein sequence ID" value="ABR59853.1"/>
    <property type="molecule type" value="Genomic_DNA"/>
</dbReference>
<dbReference type="RefSeq" id="WP_011975181.1">
    <property type="nucleotide sequence ID" value="NC_009636.1"/>
</dbReference>
<dbReference type="RefSeq" id="YP_001326688.1">
    <property type="nucleotide sequence ID" value="NC_009636.1"/>
</dbReference>
<dbReference type="SMR" id="A6U873"/>
<dbReference type="STRING" id="366394.Smed_1000"/>
<dbReference type="GeneID" id="61614916"/>
<dbReference type="KEGG" id="smd:Smed_1000"/>
<dbReference type="PATRIC" id="fig|366394.8.peg.4121"/>
<dbReference type="eggNOG" id="COG0096">
    <property type="taxonomic scope" value="Bacteria"/>
</dbReference>
<dbReference type="HOGENOM" id="CLU_098428_0_0_5"/>
<dbReference type="OrthoDB" id="9802617at2"/>
<dbReference type="Proteomes" id="UP000001108">
    <property type="component" value="Chromosome"/>
</dbReference>
<dbReference type="GO" id="GO:1990904">
    <property type="term" value="C:ribonucleoprotein complex"/>
    <property type="evidence" value="ECO:0007669"/>
    <property type="project" value="UniProtKB-KW"/>
</dbReference>
<dbReference type="GO" id="GO:0005840">
    <property type="term" value="C:ribosome"/>
    <property type="evidence" value="ECO:0007669"/>
    <property type="project" value="UniProtKB-KW"/>
</dbReference>
<dbReference type="GO" id="GO:0019843">
    <property type="term" value="F:rRNA binding"/>
    <property type="evidence" value="ECO:0007669"/>
    <property type="project" value="UniProtKB-UniRule"/>
</dbReference>
<dbReference type="GO" id="GO:0003735">
    <property type="term" value="F:structural constituent of ribosome"/>
    <property type="evidence" value="ECO:0007669"/>
    <property type="project" value="InterPro"/>
</dbReference>
<dbReference type="GO" id="GO:0006412">
    <property type="term" value="P:translation"/>
    <property type="evidence" value="ECO:0007669"/>
    <property type="project" value="UniProtKB-UniRule"/>
</dbReference>
<dbReference type="FunFam" id="3.30.1370.30:FF:000002">
    <property type="entry name" value="30S ribosomal protein S8"/>
    <property type="match status" value="1"/>
</dbReference>
<dbReference type="FunFam" id="3.30.1490.10:FF:000001">
    <property type="entry name" value="30S ribosomal protein S8"/>
    <property type="match status" value="1"/>
</dbReference>
<dbReference type="Gene3D" id="3.30.1370.30">
    <property type="match status" value="1"/>
</dbReference>
<dbReference type="Gene3D" id="3.30.1490.10">
    <property type="match status" value="1"/>
</dbReference>
<dbReference type="HAMAP" id="MF_01302_B">
    <property type="entry name" value="Ribosomal_uS8_B"/>
    <property type="match status" value="1"/>
</dbReference>
<dbReference type="InterPro" id="IPR000630">
    <property type="entry name" value="Ribosomal_uS8"/>
</dbReference>
<dbReference type="InterPro" id="IPR047863">
    <property type="entry name" value="Ribosomal_uS8_CS"/>
</dbReference>
<dbReference type="InterPro" id="IPR035987">
    <property type="entry name" value="Ribosomal_uS8_sf"/>
</dbReference>
<dbReference type="NCBIfam" id="NF001109">
    <property type="entry name" value="PRK00136.1"/>
    <property type="match status" value="1"/>
</dbReference>
<dbReference type="PANTHER" id="PTHR11758">
    <property type="entry name" value="40S RIBOSOMAL PROTEIN S15A"/>
    <property type="match status" value="1"/>
</dbReference>
<dbReference type="Pfam" id="PF00410">
    <property type="entry name" value="Ribosomal_S8"/>
    <property type="match status" value="1"/>
</dbReference>
<dbReference type="SUPFAM" id="SSF56047">
    <property type="entry name" value="Ribosomal protein S8"/>
    <property type="match status" value="1"/>
</dbReference>
<dbReference type="PROSITE" id="PS00053">
    <property type="entry name" value="RIBOSOMAL_S8"/>
    <property type="match status" value="1"/>
</dbReference>
<proteinExistence type="inferred from homology"/>
<organism>
    <name type="scientific">Sinorhizobium medicae (strain WSM419)</name>
    <name type="common">Ensifer medicae</name>
    <dbReference type="NCBI Taxonomy" id="366394"/>
    <lineage>
        <taxon>Bacteria</taxon>
        <taxon>Pseudomonadati</taxon>
        <taxon>Pseudomonadota</taxon>
        <taxon>Alphaproteobacteria</taxon>
        <taxon>Hyphomicrobiales</taxon>
        <taxon>Rhizobiaceae</taxon>
        <taxon>Sinorhizobium/Ensifer group</taxon>
        <taxon>Sinorhizobium</taxon>
    </lineage>
</organism>
<feature type="chain" id="PRO_1000051800" description="Small ribosomal subunit protein uS8">
    <location>
        <begin position="1"/>
        <end position="132"/>
    </location>
</feature>
<sequence length="132" mass="14311">MAMTDPLGDMLTRIRNGAARRKSSVSTPASKLRARVLDVLQAEGYIRGYSEVEFGNGKAELSIELKYYEGASVIREIARVSKPGRRVYVSVKSIPQVANGLGITILSTPKGVMADHQAREQNVGGEVLCSVF</sequence>
<comment type="function">
    <text evidence="1">One of the primary rRNA binding proteins, it binds directly to 16S rRNA central domain where it helps coordinate assembly of the platform of the 30S subunit.</text>
</comment>
<comment type="subunit">
    <text evidence="1">Part of the 30S ribosomal subunit. Contacts proteins S5 and S12.</text>
</comment>
<comment type="similarity">
    <text evidence="1">Belongs to the universal ribosomal protein uS8 family.</text>
</comment>
<gene>
    <name evidence="1" type="primary">rpsH</name>
    <name type="ordered locus">Smed_1000</name>
</gene>